<organismHost>
    <name type="scientific">Escherichia coli</name>
    <dbReference type="NCBI Taxonomy" id="562"/>
</organismHost>
<protein>
    <recommendedName>
        <fullName>Protein ea59</fullName>
    </recommendedName>
</protein>
<sequence>MLEFSVIERGGYIPAVEKNKAFLRADGWNDYSFVTMFYLTVFDEHGEKCDIGNVKIGFVGQKEEVSTYSLIDKKFSQLPEMFFSLGESIDYYVNLSKLSDGFKHNLLKAIQDLVVWPNRLADIENESVLNTSLLRGVTLSEIHGQFARVLNGLPELSDFHFSFNRKSAPGFSDLTIPFEVTVNSMPSTNIHAFIGRNGCGKTTILNGMIGAITNPENNEYFFSENNRLIESRIPKGYFRSLVSVSFSAFDPFTPPKEQPDPAKGTQYFYIGLKNAASNSLKSLGDLRLEFISAFIGCMRVDRKRQLWLEAIKKLSSDENFSNMELISLISKYEELRRNEPQIQVDDDKFTKLFYDNIQKYLLRMSSGHAIVLFTITRLVDVVGEKSLVLFDEPEVHLHPPLLSAFLRTLSDLLDARNGVAIIATHSPVVLQEVPKSCMWKVLRSREAINIIRPDIETFGENLGVLTREVFLLEVTNSGYHHLLSQSVDSELSYETILKNYNGQIGLEGRTVLKAMIMNRDEGKVQ</sequence>
<keyword id="KW-1185">Reference proteome</keyword>
<dbReference type="EMBL" id="J02459">
    <property type="protein sequence ID" value="AAA96561.1"/>
    <property type="molecule type" value="Genomic_DNA"/>
</dbReference>
<dbReference type="PIR" id="G43009">
    <property type="entry name" value="ZEBP5L"/>
</dbReference>
<dbReference type="RefSeq" id="NP_040608.1">
    <property type="nucleotide sequence ID" value="NC_001416.1"/>
</dbReference>
<dbReference type="GeneID" id="2703472"/>
<dbReference type="KEGG" id="vg:3827053"/>
<dbReference type="Proteomes" id="UP000001711">
    <property type="component" value="Genome"/>
</dbReference>
<dbReference type="GO" id="GO:0005524">
    <property type="term" value="F:ATP binding"/>
    <property type="evidence" value="ECO:0007669"/>
    <property type="project" value="InterPro"/>
</dbReference>
<dbReference type="GO" id="GO:0016887">
    <property type="term" value="F:ATP hydrolysis activity"/>
    <property type="evidence" value="ECO:0007669"/>
    <property type="project" value="InterPro"/>
</dbReference>
<dbReference type="Gene3D" id="3.40.50.300">
    <property type="entry name" value="P-loop containing nucleotide triphosphate hydrolases"/>
    <property type="match status" value="1"/>
</dbReference>
<dbReference type="InterPro" id="IPR003959">
    <property type="entry name" value="ATPase_AAA_core"/>
</dbReference>
<dbReference type="InterPro" id="IPR051396">
    <property type="entry name" value="Bact_Antivir_Def_Nuclease"/>
</dbReference>
<dbReference type="InterPro" id="IPR027417">
    <property type="entry name" value="P-loop_NTPase"/>
</dbReference>
<dbReference type="PANTHER" id="PTHR43581">
    <property type="entry name" value="ATP/GTP PHOSPHATASE"/>
    <property type="match status" value="1"/>
</dbReference>
<dbReference type="PANTHER" id="PTHR43581:SF2">
    <property type="entry name" value="EXCINUCLEASE ATPASE SUBUNIT"/>
    <property type="match status" value="1"/>
</dbReference>
<dbReference type="Pfam" id="PF13304">
    <property type="entry name" value="AAA_21"/>
    <property type="match status" value="1"/>
</dbReference>
<dbReference type="SUPFAM" id="SSF52540">
    <property type="entry name" value="P-loop containing nucleoside triphosphate hydrolases"/>
    <property type="match status" value="1"/>
</dbReference>
<reference key="1">
    <citation type="journal article" date="1982" name="J. Mol. Biol.">
        <title>Nucleotide sequence of bacteriophage lambda DNA.</title>
        <authorList>
            <person name="Sanger F."/>
            <person name="Coulson A.R."/>
            <person name="Hong G.F."/>
            <person name="Hill D.F."/>
            <person name="Petersen G.B."/>
        </authorList>
    </citation>
    <scope>NUCLEOTIDE SEQUENCE [LARGE SCALE GENOMIC DNA]</scope>
</reference>
<gene>
    <name type="primary">ea59</name>
</gene>
<proteinExistence type="predicted"/>
<name>EA59_LAMBD</name>
<accession>P03754</accession>
<feature type="chain" id="PRO_0000077606" description="Protein ea59">
    <location>
        <begin position="1"/>
        <end position="525"/>
    </location>
</feature>
<organism>
    <name type="scientific">Escherichia phage lambda</name>
    <name type="common">Bacteriophage lambda</name>
    <dbReference type="NCBI Taxonomy" id="2681611"/>
    <lineage>
        <taxon>Viruses</taxon>
        <taxon>Duplodnaviria</taxon>
        <taxon>Heunggongvirae</taxon>
        <taxon>Uroviricota</taxon>
        <taxon>Caudoviricetes</taxon>
        <taxon>Lambdavirus</taxon>
        <taxon>Lambdavirus lambda</taxon>
    </lineage>
</organism>